<protein>
    <recommendedName>
        <fullName evidence="1">Aminomethyltransferase</fullName>
        <ecNumber evidence="1">2.1.2.10</ecNumber>
    </recommendedName>
    <alternativeName>
        <fullName evidence="1">Glycine cleavage system T protein</fullName>
    </alternativeName>
</protein>
<gene>
    <name evidence="1" type="primary">gcvT</name>
    <name type="ordered locus">Ctha_0507</name>
</gene>
<dbReference type="EC" id="2.1.2.10" evidence="1"/>
<dbReference type="EMBL" id="CP001100">
    <property type="protein sequence ID" value="ACF12978.1"/>
    <property type="molecule type" value="Genomic_DNA"/>
</dbReference>
<dbReference type="RefSeq" id="WP_012499062.1">
    <property type="nucleotide sequence ID" value="NC_011026.1"/>
</dbReference>
<dbReference type="SMR" id="B3QV24"/>
<dbReference type="STRING" id="517418.Ctha_0507"/>
<dbReference type="KEGG" id="cts:Ctha_0507"/>
<dbReference type="eggNOG" id="COG0404">
    <property type="taxonomic scope" value="Bacteria"/>
</dbReference>
<dbReference type="HOGENOM" id="CLU_007884_10_2_10"/>
<dbReference type="OrthoDB" id="9774591at2"/>
<dbReference type="Proteomes" id="UP000001208">
    <property type="component" value="Chromosome"/>
</dbReference>
<dbReference type="GO" id="GO:0005829">
    <property type="term" value="C:cytosol"/>
    <property type="evidence" value="ECO:0007669"/>
    <property type="project" value="TreeGrafter"/>
</dbReference>
<dbReference type="GO" id="GO:0005960">
    <property type="term" value="C:glycine cleavage complex"/>
    <property type="evidence" value="ECO:0007669"/>
    <property type="project" value="InterPro"/>
</dbReference>
<dbReference type="GO" id="GO:0004047">
    <property type="term" value="F:aminomethyltransferase activity"/>
    <property type="evidence" value="ECO:0007669"/>
    <property type="project" value="UniProtKB-UniRule"/>
</dbReference>
<dbReference type="GO" id="GO:0008483">
    <property type="term" value="F:transaminase activity"/>
    <property type="evidence" value="ECO:0007669"/>
    <property type="project" value="UniProtKB-KW"/>
</dbReference>
<dbReference type="GO" id="GO:0019464">
    <property type="term" value="P:glycine decarboxylation via glycine cleavage system"/>
    <property type="evidence" value="ECO:0007669"/>
    <property type="project" value="UniProtKB-UniRule"/>
</dbReference>
<dbReference type="FunFam" id="2.40.30.110:FF:000003">
    <property type="entry name" value="Aminomethyltransferase"/>
    <property type="match status" value="1"/>
</dbReference>
<dbReference type="FunFam" id="3.30.70.1400:FF:000001">
    <property type="entry name" value="Aminomethyltransferase"/>
    <property type="match status" value="1"/>
</dbReference>
<dbReference type="Gene3D" id="2.40.30.110">
    <property type="entry name" value="Aminomethyltransferase beta-barrel domains"/>
    <property type="match status" value="1"/>
</dbReference>
<dbReference type="Gene3D" id="3.30.70.1400">
    <property type="entry name" value="Aminomethyltransferase beta-barrel domains"/>
    <property type="match status" value="1"/>
</dbReference>
<dbReference type="Gene3D" id="4.10.1250.10">
    <property type="entry name" value="Aminomethyltransferase fragment"/>
    <property type="match status" value="1"/>
</dbReference>
<dbReference type="Gene3D" id="3.30.1360.120">
    <property type="entry name" value="Probable tRNA modification gtpase trme, domain 1"/>
    <property type="match status" value="1"/>
</dbReference>
<dbReference type="HAMAP" id="MF_00259">
    <property type="entry name" value="GcvT"/>
    <property type="match status" value="1"/>
</dbReference>
<dbReference type="InterPro" id="IPR006223">
    <property type="entry name" value="GCS_T"/>
</dbReference>
<dbReference type="InterPro" id="IPR022903">
    <property type="entry name" value="GCS_T_bac"/>
</dbReference>
<dbReference type="InterPro" id="IPR013977">
    <property type="entry name" value="GCST_C"/>
</dbReference>
<dbReference type="InterPro" id="IPR006222">
    <property type="entry name" value="GCV_T_N"/>
</dbReference>
<dbReference type="InterPro" id="IPR028896">
    <property type="entry name" value="GcvT/YgfZ/DmdA"/>
</dbReference>
<dbReference type="InterPro" id="IPR029043">
    <property type="entry name" value="GcvT/YgfZ_C"/>
</dbReference>
<dbReference type="InterPro" id="IPR027266">
    <property type="entry name" value="TrmE/GcvT_dom1"/>
</dbReference>
<dbReference type="NCBIfam" id="TIGR00528">
    <property type="entry name" value="gcvT"/>
    <property type="match status" value="1"/>
</dbReference>
<dbReference type="NCBIfam" id="NF001567">
    <property type="entry name" value="PRK00389.1"/>
    <property type="match status" value="1"/>
</dbReference>
<dbReference type="PANTHER" id="PTHR43757">
    <property type="entry name" value="AMINOMETHYLTRANSFERASE"/>
    <property type="match status" value="1"/>
</dbReference>
<dbReference type="PANTHER" id="PTHR43757:SF2">
    <property type="entry name" value="AMINOMETHYLTRANSFERASE, MITOCHONDRIAL"/>
    <property type="match status" value="1"/>
</dbReference>
<dbReference type="Pfam" id="PF01571">
    <property type="entry name" value="GCV_T"/>
    <property type="match status" value="1"/>
</dbReference>
<dbReference type="Pfam" id="PF08669">
    <property type="entry name" value="GCV_T_C"/>
    <property type="match status" value="1"/>
</dbReference>
<dbReference type="PIRSF" id="PIRSF006487">
    <property type="entry name" value="GcvT"/>
    <property type="match status" value="1"/>
</dbReference>
<dbReference type="SUPFAM" id="SSF101790">
    <property type="entry name" value="Aminomethyltransferase beta-barrel domain"/>
    <property type="match status" value="1"/>
</dbReference>
<dbReference type="SUPFAM" id="SSF103025">
    <property type="entry name" value="Folate-binding domain"/>
    <property type="match status" value="1"/>
</dbReference>
<feature type="chain" id="PRO_1000114088" description="Aminomethyltransferase">
    <location>
        <begin position="1"/>
        <end position="362"/>
    </location>
</feature>
<comment type="function">
    <text evidence="1">The glycine cleavage system catalyzes the degradation of glycine.</text>
</comment>
<comment type="catalytic activity">
    <reaction evidence="1">
        <text>N(6)-[(R)-S(8)-aminomethyldihydrolipoyl]-L-lysyl-[protein] + (6S)-5,6,7,8-tetrahydrofolate = N(6)-[(R)-dihydrolipoyl]-L-lysyl-[protein] + (6R)-5,10-methylene-5,6,7,8-tetrahydrofolate + NH4(+)</text>
        <dbReference type="Rhea" id="RHEA:16945"/>
        <dbReference type="Rhea" id="RHEA-COMP:10475"/>
        <dbReference type="Rhea" id="RHEA-COMP:10492"/>
        <dbReference type="ChEBI" id="CHEBI:15636"/>
        <dbReference type="ChEBI" id="CHEBI:28938"/>
        <dbReference type="ChEBI" id="CHEBI:57453"/>
        <dbReference type="ChEBI" id="CHEBI:83100"/>
        <dbReference type="ChEBI" id="CHEBI:83143"/>
        <dbReference type="EC" id="2.1.2.10"/>
    </reaction>
</comment>
<comment type="subunit">
    <text evidence="1">The glycine cleavage system is composed of four proteins: P, T, L and H.</text>
</comment>
<comment type="similarity">
    <text evidence="1">Belongs to the GcvT family.</text>
</comment>
<sequence>MKYTPLHKIHQQLGAKLVDFAGFEMPVQYDGILVEHKAVREAVGLFDVSHMGEFEVKGKGAKAFLQNMTTNDVESLCDGKAQYSLLLYEDGGVVDDLLVYKIADEHYFLIVNASNIEKDFDWLKQHQPDDEVVLENRSDELSLIAIQGPKAEAVLSKLTDVPLDAIKYYHFVFGDVCGKRTLISRTGYTGEAGFELCMANEHAEEIWHALIEAGLPFGIVPVGLGARDTLRLEMGYSLYGHEIDHQTNPYEAQLGWITKLQKGDFIGKNACVEKKLHLEQTLVGFTLTGKNIPRQGYKIQDLSGTDIGVVCSGTLSPTLGKPIGTGYVKSSFSKIDSKVYINIRGKLQEAAVVKVPFLHKNR</sequence>
<proteinExistence type="inferred from homology"/>
<organism>
    <name type="scientific">Chloroherpeton thalassium (strain ATCC 35110 / GB-78)</name>
    <dbReference type="NCBI Taxonomy" id="517418"/>
    <lineage>
        <taxon>Bacteria</taxon>
        <taxon>Pseudomonadati</taxon>
        <taxon>Chlorobiota</taxon>
        <taxon>Chlorobiia</taxon>
        <taxon>Chlorobiales</taxon>
        <taxon>Chloroherpetonaceae</taxon>
        <taxon>Chloroherpeton</taxon>
    </lineage>
</organism>
<keyword id="KW-0032">Aminotransferase</keyword>
<keyword id="KW-1185">Reference proteome</keyword>
<keyword id="KW-0808">Transferase</keyword>
<evidence type="ECO:0000255" key="1">
    <source>
        <dbReference type="HAMAP-Rule" id="MF_00259"/>
    </source>
</evidence>
<accession>B3QV24</accession>
<name>GCST_CHLT3</name>
<reference key="1">
    <citation type="submission" date="2008-06" db="EMBL/GenBank/DDBJ databases">
        <title>Complete sequence of Chloroherpeton thalassium ATCC 35110.</title>
        <authorList>
            <consortium name="US DOE Joint Genome Institute"/>
            <person name="Lucas S."/>
            <person name="Copeland A."/>
            <person name="Lapidus A."/>
            <person name="Glavina del Rio T."/>
            <person name="Dalin E."/>
            <person name="Tice H."/>
            <person name="Bruce D."/>
            <person name="Goodwin L."/>
            <person name="Pitluck S."/>
            <person name="Schmutz J."/>
            <person name="Larimer F."/>
            <person name="Land M."/>
            <person name="Hauser L."/>
            <person name="Kyrpides N."/>
            <person name="Mikhailova N."/>
            <person name="Liu Z."/>
            <person name="Li T."/>
            <person name="Zhao F."/>
            <person name="Overmann J."/>
            <person name="Bryant D.A."/>
            <person name="Richardson P."/>
        </authorList>
    </citation>
    <scope>NUCLEOTIDE SEQUENCE [LARGE SCALE GENOMIC DNA]</scope>
    <source>
        <strain>ATCC 35110 / GB-78</strain>
    </source>
</reference>